<gene>
    <name type="ordered locus">CBU_0043</name>
</gene>
<accession>Q83FA3</accession>
<dbReference type="EC" id="3.6.1.66" evidence="1"/>
<dbReference type="EMBL" id="AE016828">
    <property type="protein sequence ID" value="AAO89612.1"/>
    <property type="molecule type" value="Genomic_DNA"/>
</dbReference>
<dbReference type="RefSeq" id="NP_819098.1">
    <property type="nucleotide sequence ID" value="NC_002971.4"/>
</dbReference>
<dbReference type="RefSeq" id="WP_005769347.1">
    <property type="nucleotide sequence ID" value="NC_002971.4"/>
</dbReference>
<dbReference type="PDB" id="3TQU">
    <property type="method" value="X-ray"/>
    <property type="resolution" value="1.90 A"/>
    <property type="chains" value="A/B/C/D=1-200"/>
</dbReference>
<dbReference type="PDBsum" id="3TQU"/>
<dbReference type="SMR" id="Q83FA3"/>
<dbReference type="STRING" id="227377.CBU_0043"/>
<dbReference type="DNASU" id="1207905"/>
<dbReference type="EnsemblBacteria" id="AAO89612">
    <property type="protein sequence ID" value="AAO89612"/>
    <property type="gene ID" value="CBU_0043"/>
</dbReference>
<dbReference type="GeneID" id="1207905"/>
<dbReference type="KEGG" id="cbu:CBU_0043"/>
<dbReference type="PATRIC" id="fig|227377.7.peg.44"/>
<dbReference type="eggNOG" id="COG0127">
    <property type="taxonomic scope" value="Bacteria"/>
</dbReference>
<dbReference type="HOGENOM" id="CLU_082080_0_3_6"/>
<dbReference type="OrthoDB" id="9807456at2"/>
<dbReference type="EvolutionaryTrace" id="Q83FA3"/>
<dbReference type="Proteomes" id="UP000002671">
    <property type="component" value="Chromosome"/>
</dbReference>
<dbReference type="GO" id="GO:0005737">
    <property type="term" value="C:cytoplasm"/>
    <property type="evidence" value="ECO:0000318"/>
    <property type="project" value="GO_Central"/>
</dbReference>
<dbReference type="GO" id="GO:0005829">
    <property type="term" value="C:cytosol"/>
    <property type="evidence" value="ECO:0000318"/>
    <property type="project" value="GO_Central"/>
</dbReference>
<dbReference type="GO" id="GO:0035870">
    <property type="term" value="F:dITP diphosphatase activity"/>
    <property type="evidence" value="ECO:0007669"/>
    <property type="project" value="RHEA"/>
</dbReference>
<dbReference type="GO" id="GO:0036220">
    <property type="term" value="F:ITP diphosphatase activity"/>
    <property type="evidence" value="ECO:0007669"/>
    <property type="project" value="UniProtKB-EC"/>
</dbReference>
<dbReference type="GO" id="GO:0046872">
    <property type="term" value="F:metal ion binding"/>
    <property type="evidence" value="ECO:0007669"/>
    <property type="project" value="UniProtKB-KW"/>
</dbReference>
<dbReference type="GO" id="GO:0047429">
    <property type="term" value="F:nucleoside triphosphate diphosphatase activity"/>
    <property type="evidence" value="ECO:0000318"/>
    <property type="project" value="GO_Central"/>
</dbReference>
<dbReference type="GO" id="GO:0000166">
    <property type="term" value="F:nucleotide binding"/>
    <property type="evidence" value="ECO:0007669"/>
    <property type="project" value="UniProtKB-KW"/>
</dbReference>
<dbReference type="GO" id="GO:0017111">
    <property type="term" value="F:ribonucleoside triphosphate phosphatase activity"/>
    <property type="evidence" value="ECO:0007669"/>
    <property type="project" value="InterPro"/>
</dbReference>
<dbReference type="GO" id="GO:0036222">
    <property type="term" value="F:XTP diphosphatase activity"/>
    <property type="evidence" value="ECO:0007669"/>
    <property type="project" value="RHEA"/>
</dbReference>
<dbReference type="GO" id="GO:0009143">
    <property type="term" value="P:nucleoside triphosphate catabolic process"/>
    <property type="evidence" value="ECO:0000318"/>
    <property type="project" value="GO_Central"/>
</dbReference>
<dbReference type="GO" id="GO:0009117">
    <property type="term" value="P:nucleotide metabolic process"/>
    <property type="evidence" value="ECO:0007669"/>
    <property type="project" value="UniProtKB-KW"/>
</dbReference>
<dbReference type="GO" id="GO:0009146">
    <property type="term" value="P:purine nucleoside triphosphate catabolic process"/>
    <property type="evidence" value="ECO:0007669"/>
    <property type="project" value="UniProtKB-UniRule"/>
</dbReference>
<dbReference type="CDD" id="cd00515">
    <property type="entry name" value="HAM1"/>
    <property type="match status" value="1"/>
</dbReference>
<dbReference type="FunFam" id="3.90.950.10:FF:000001">
    <property type="entry name" value="dITP/XTP pyrophosphatase"/>
    <property type="match status" value="1"/>
</dbReference>
<dbReference type="Gene3D" id="3.90.950.10">
    <property type="match status" value="1"/>
</dbReference>
<dbReference type="HAMAP" id="MF_01405">
    <property type="entry name" value="Non_canon_purine_NTPase"/>
    <property type="match status" value="1"/>
</dbReference>
<dbReference type="InterPro" id="IPR020922">
    <property type="entry name" value="dITP/XTP_pyrophosphatase"/>
</dbReference>
<dbReference type="InterPro" id="IPR029001">
    <property type="entry name" value="ITPase-like_fam"/>
</dbReference>
<dbReference type="InterPro" id="IPR002637">
    <property type="entry name" value="RdgB/HAM1"/>
</dbReference>
<dbReference type="NCBIfam" id="NF011397">
    <property type="entry name" value="PRK14822.1"/>
    <property type="match status" value="1"/>
</dbReference>
<dbReference type="NCBIfam" id="TIGR00042">
    <property type="entry name" value="RdgB/HAM1 family non-canonical purine NTP pyrophosphatase"/>
    <property type="match status" value="1"/>
</dbReference>
<dbReference type="PANTHER" id="PTHR11067:SF9">
    <property type="entry name" value="INOSINE TRIPHOSPHATE PYROPHOSPHATASE"/>
    <property type="match status" value="1"/>
</dbReference>
<dbReference type="PANTHER" id="PTHR11067">
    <property type="entry name" value="INOSINE TRIPHOSPHATE PYROPHOSPHATASE/HAM1 PROTEIN"/>
    <property type="match status" value="1"/>
</dbReference>
<dbReference type="Pfam" id="PF01725">
    <property type="entry name" value="Ham1p_like"/>
    <property type="match status" value="1"/>
</dbReference>
<dbReference type="SUPFAM" id="SSF52972">
    <property type="entry name" value="ITPase-like"/>
    <property type="match status" value="1"/>
</dbReference>
<sequence length="200" mass="21777">MLEIVLASQNSSKLAEMQELLRDLEIKFIPQTEFSVPDIEETGSTFVENAIIKARHAAKQTGLPALADDSGLTIAALNSAPGVFSSRYAGKNATDAERIQKVLEALEAADDSDRSASFHCVIALMENENDPAPLICHGVWEGEIAREPRGKNGFGYDPIFYVPSHQRTAAELDPQEKNAISHRGQALEQLSTVLTEAFLV</sequence>
<proteinExistence type="evidence at protein level"/>
<protein>
    <recommendedName>
        <fullName evidence="1">dITP/XTP pyrophosphatase</fullName>
        <ecNumber evidence="1">3.6.1.66</ecNumber>
    </recommendedName>
    <alternativeName>
        <fullName evidence="1">Non-canonical purine NTP pyrophosphatase</fullName>
    </alternativeName>
    <alternativeName>
        <fullName evidence="1">Non-standard purine NTP pyrophosphatase</fullName>
    </alternativeName>
    <alternativeName>
        <fullName evidence="1">Nucleoside-triphosphate diphosphatase</fullName>
    </alternativeName>
    <alternativeName>
        <fullName evidence="1">Nucleoside-triphosphate pyrophosphatase</fullName>
        <shortName evidence="1">NTPase</shortName>
    </alternativeName>
</protein>
<feature type="chain" id="PRO_0000178160" description="dITP/XTP pyrophosphatase">
    <location>
        <begin position="1"/>
        <end position="200"/>
    </location>
</feature>
<feature type="active site" description="Proton acceptor" evidence="1">
    <location>
        <position position="69"/>
    </location>
</feature>
<feature type="binding site" evidence="1">
    <location>
        <begin position="8"/>
        <end position="13"/>
    </location>
    <ligand>
        <name>substrate</name>
    </ligand>
</feature>
<feature type="binding site" evidence="1">
    <location>
        <position position="40"/>
    </location>
    <ligand>
        <name>Mg(2+)</name>
        <dbReference type="ChEBI" id="CHEBI:18420"/>
    </ligand>
</feature>
<feature type="binding site" evidence="1">
    <location>
        <position position="69"/>
    </location>
    <ligand>
        <name>Mg(2+)</name>
        <dbReference type="ChEBI" id="CHEBI:18420"/>
    </ligand>
</feature>
<feature type="binding site" evidence="1">
    <location>
        <position position="70"/>
    </location>
    <ligand>
        <name>substrate</name>
    </ligand>
</feature>
<feature type="binding site" evidence="1">
    <location>
        <begin position="154"/>
        <end position="157"/>
    </location>
    <ligand>
        <name>substrate</name>
    </ligand>
</feature>
<feature type="binding site" evidence="1">
    <location>
        <position position="177"/>
    </location>
    <ligand>
        <name>substrate</name>
    </ligand>
</feature>
<feature type="binding site" evidence="1">
    <location>
        <begin position="182"/>
        <end position="183"/>
    </location>
    <ligand>
        <name>substrate</name>
    </ligand>
</feature>
<feature type="strand" evidence="2">
    <location>
        <begin position="2"/>
        <end position="6"/>
    </location>
</feature>
<feature type="helix" evidence="2">
    <location>
        <begin position="11"/>
        <end position="20"/>
    </location>
</feature>
<feature type="turn" evidence="2">
    <location>
        <begin position="21"/>
        <end position="23"/>
    </location>
</feature>
<feature type="strand" evidence="2">
    <location>
        <begin position="24"/>
        <end position="30"/>
    </location>
</feature>
<feature type="helix" evidence="2">
    <location>
        <begin position="31"/>
        <end position="34"/>
    </location>
</feature>
<feature type="helix" evidence="2">
    <location>
        <begin position="46"/>
        <end position="61"/>
    </location>
</feature>
<feature type="strand" evidence="2">
    <location>
        <begin position="65"/>
        <end position="74"/>
    </location>
</feature>
<feature type="helix" evidence="2">
    <location>
        <begin position="75"/>
        <end position="77"/>
    </location>
</feature>
<feature type="helix" evidence="2">
    <location>
        <begin position="82"/>
        <end position="84"/>
    </location>
</feature>
<feature type="turn" evidence="2">
    <location>
        <begin position="85"/>
        <end position="89"/>
    </location>
</feature>
<feature type="helix" evidence="2">
    <location>
        <begin position="95"/>
        <end position="109"/>
    </location>
</feature>
<feature type="strand" evidence="2">
    <location>
        <begin position="115"/>
        <end position="127"/>
    </location>
</feature>
<feature type="strand" evidence="2">
    <location>
        <begin position="134"/>
        <end position="144"/>
    </location>
</feature>
<feature type="strand" evidence="2">
    <location>
        <begin position="151"/>
        <end position="153"/>
    </location>
</feature>
<feature type="helix" evidence="2">
    <location>
        <begin position="157"/>
        <end position="159"/>
    </location>
</feature>
<feature type="turn" evidence="2">
    <location>
        <begin position="163"/>
        <end position="165"/>
    </location>
</feature>
<feature type="strand" evidence="2">
    <location>
        <begin position="166"/>
        <end position="168"/>
    </location>
</feature>
<feature type="turn" evidence="2">
    <location>
        <begin position="169"/>
        <end position="171"/>
    </location>
</feature>
<feature type="helix" evidence="2">
    <location>
        <begin position="174"/>
        <end position="180"/>
    </location>
</feature>
<feature type="helix" evidence="2">
    <location>
        <begin position="182"/>
        <end position="196"/>
    </location>
</feature>
<keyword id="KW-0002">3D-structure</keyword>
<keyword id="KW-0378">Hydrolase</keyword>
<keyword id="KW-0460">Magnesium</keyword>
<keyword id="KW-0479">Metal-binding</keyword>
<keyword id="KW-0546">Nucleotide metabolism</keyword>
<keyword id="KW-0547">Nucleotide-binding</keyword>
<keyword id="KW-1185">Reference proteome</keyword>
<name>IXTPA_COXBU</name>
<organism>
    <name type="scientific">Coxiella burnetii (strain RSA 493 / Nine Mile phase I)</name>
    <dbReference type="NCBI Taxonomy" id="227377"/>
    <lineage>
        <taxon>Bacteria</taxon>
        <taxon>Pseudomonadati</taxon>
        <taxon>Pseudomonadota</taxon>
        <taxon>Gammaproteobacteria</taxon>
        <taxon>Legionellales</taxon>
        <taxon>Coxiellaceae</taxon>
        <taxon>Coxiella</taxon>
    </lineage>
</organism>
<evidence type="ECO:0000255" key="1">
    <source>
        <dbReference type="HAMAP-Rule" id="MF_01405"/>
    </source>
</evidence>
<evidence type="ECO:0007829" key="2">
    <source>
        <dbReference type="PDB" id="3TQU"/>
    </source>
</evidence>
<comment type="function">
    <text evidence="1">Pyrophosphatase that catalyzes the hydrolysis of nucleoside triphosphates to their monophosphate derivatives, with a high preference for the non-canonical purine nucleotides XTP (xanthosine triphosphate), dITP (deoxyinosine triphosphate) and ITP. Seems to function as a house-cleaning enzyme that removes non-canonical purine nucleotides from the nucleotide pool, thus preventing their incorporation into DNA/RNA and avoiding chromosomal lesions.</text>
</comment>
<comment type="catalytic activity">
    <reaction evidence="1">
        <text>XTP + H2O = XMP + diphosphate + H(+)</text>
        <dbReference type="Rhea" id="RHEA:28610"/>
        <dbReference type="ChEBI" id="CHEBI:15377"/>
        <dbReference type="ChEBI" id="CHEBI:15378"/>
        <dbReference type="ChEBI" id="CHEBI:33019"/>
        <dbReference type="ChEBI" id="CHEBI:57464"/>
        <dbReference type="ChEBI" id="CHEBI:61314"/>
        <dbReference type="EC" id="3.6.1.66"/>
    </reaction>
</comment>
<comment type="catalytic activity">
    <reaction evidence="1">
        <text>dITP + H2O = dIMP + diphosphate + H(+)</text>
        <dbReference type="Rhea" id="RHEA:28342"/>
        <dbReference type="ChEBI" id="CHEBI:15377"/>
        <dbReference type="ChEBI" id="CHEBI:15378"/>
        <dbReference type="ChEBI" id="CHEBI:33019"/>
        <dbReference type="ChEBI" id="CHEBI:61194"/>
        <dbReference type="ChEBI" id="CHEBI:61382"/>
        <dbReference type="EC" id="3.6.1.66"/>
    </reaction>
</comment>
<comment type="catalytic activity">
    <reaction evidence="1">
        <text>ITP + H2O = IMP + diphosphate + H(+)</text>
        <dbReference type="Rhea" id="RHEA:29399"/>
        <dbReference type="ChEBI" id="CHEBI:15377"/>
        <dbReference type="ChEBI" id="CHEBI:15378"/>
        <dbReference type="ChEBI" id="CHEBI:33019"/>
        <dbReference type="ChEBI" id="CHEBI:58053"/>
        <dbReference type="ChEBI" id="CHEBI:61402"/>
        <dbReference type="EC" id="3.6.1.66"/>
    </reaction>
</comment>
<comment type="cofactor">
    <cofactor evidence="1">
        <name>Mg(2+)</name>
        <dbReference type="ChEBI" id="CHEBI:18420"/>
    </cofactor>
    <text evidence="1">Binds 1 Mg(2+) ion per subunit.</text>
</comment>
<comment type="subunit">
    <text evidence="1">Homodimer.</text>
</comment>
<comment type="similarity">
    <text evidence="1">Belongs to the HAM1 NTPase family.</text>
</comment>
<reference key="1">
    <citation type="journal article" date="2003" name="Proc. Natl. Acad. Sci. U.S.A.">
        <title>Complete genome sequence of the Q-fever pathogen, Coxiella burnetii.</title>
        <authorList>
            <person name="Seshadri R."/>
            <person name="Paulsen I.T."/>
            <person name="Eisen J.A."/>
            <person name="Read T.D."/>
            <person name="Nelson K.E."/>
            <person name="Nelson W.C."/>
            <person name="Ward N.L."/>
            <person name="Tettelin H."/>
            <person name="Davidsen T.M."/>
            <person name="Beanan M.J."/>
            <person name="DeBoy R.T."/>
            <person name="Daugherty S.C."/>
            <person name="Brinkac L.M."/>
            <person name="Madupu R."/>
            <person name="Dodson R.J."/>
            <person name="Khouri H.M."/>
            <person name="Lee K.H."/>
            <person name="Carty H.A."/>
            <person name="Scanlan D."/>
            <person name="Heinzen R.A."/>
            <person name="Thompson H.A."/>
            <person name="Samuel J.E."/>
            <person name="Fraser C.M."/>
            <person name="Heidelberg J.F."/>
        </authorList>
    </citation>
    <scope>NUCLEOTIDE SEQUENCE [LARGE SCALE GENOMIC DNA]</scope>
    <source>
        <strain>RSA 493 / Nine Mile phase I</strain>
    </source>
</reference>